<proteinExistence type="evidence at transcript level"/>
<name>REST_DANRE</name>
<organism>
    <name type="scientific">Danio rerio</name>
    <name type="common">Zebrafish</name>
    <name type="synonym">Brachydanio rerio</name>
    <dbReference type="NCBI Taxonomy" id="7955"/>
    <lineage>
        <taxon>Eukaryota</taxon>
        <taxon>Metazoa</taxon>
        <taxon>Chordata</taxon>
        <taxon>Craniata</taxon>
        <taxon>Vertebrata</taxon>
        <taxon>Euteleostomi</taxon>
        <taxon>Actinopterygii</taxon>
        <taxon>Neopterygii</taxon>
        <taxon>Teleostei</taxon>
        <taxon>Ostariophysi</taxon>
        <taxon>Cypriniformes</taxon>
        <taxon>Danionidae</taxon>
        <taxon>Danioninae</taxon>
        <taxon>Danio</taxon>
    </lineage>
</organism>
<gene>
    <name type="primary">rest</name>
    <name type="synonym">nrsf</name>
</gene>
<sequence>MSQPVFPTASGIFLPDLHHDEVSAPQLVMLANVVVSAEASASEYSTEGKQMMELQTVACSSYSDSEEDDDAVVRYSMDTSEDLYTQQASHIQPEPVLEEIEIVRVGRPPNQTESTENAASAEQKRTTLAILESSRKKKKPFFCKPCQYQGENEQEFIVHIRTHGTKKMLVVNGGDSDEDLSADAGPQTSVPNAESAESNSKGVIRCERCGYNTNRFDHYMAHLKHHTKEGEDQRVFKCTICAYTTISQYHWKKHLRNHFPSKLFTCSQCSYFSDRKNNYIQHIRTHAGERPFQCIYCEYSSSQKTHLTRHMRTHSGERPFKCDNCSYLAANQHEVTRHARQVHNGPKPLSCPYCQYKTADRSNFKKHVELHVNPRQFLCPVCKYAASKKCNLQYHIKSRHPGCKDISMDVSKVRLRVKRSDGDDASPNKLTAEQAKIMEELEDAGPINLSIKKPSKLNAVVETEKSSKKNMDGKANQPQPNEKKSSSKNDPKEKTAKKLKGKTAVKDTEETQTEDTRVNNKKETKKAVKSAEKALKSRQKKEKPVKDSSVQQQSDDCEQTQHTPQQNETQENRPEKENRSLTEIANAKDCGKVQTKKPCKKQTKTLKVCGETQNVEEEEIMRQKAGKRKAENPAEPKQRIKRTKKKKDSGKPTTSEANQTNPEVMESESSEANNASKPDDSIDESQNPPVAESRPDVEPPTVSDCPIEKAPAVEDVQRPLEAEISTAAPDAPEVDSGNEMPSPTDSDGAPGFTPTLPLQHKPTDAEDDEGIHSNDGGSDISDSASEGSYDSGLMAGAEKLPETPTEERDASAARLLSHTCIFCDRSFALEMDYRKHLNRHLVNVYYLEGAAQGGK</sequence>
<comment type="function">
    <text evidence="1">Transcriptional repressor which binds neuron-restrictive silencer element (NRSE) and represses neuronal gene transcription in non-neuronal cells.</text>
</comment>
<comment type="subcellular location">
    <subcellularLocation>
        <location evidence="1">Nucleus</location>
    </subcellularLocation>
    <subcellularLocation>
        <location evidence="1">Cytoplasm</location>
    </subcellularLocation>
</comment>
<comment type="domain">
    <text evidence="1">The C2H2-type zinc finger 5 is required for nuclear localization.</text>
</comment>
<feature type="chain" id="PRO_0000269550" description="RE1-silencing transcription factor">
    <location>
        <begin position="1"/>
        <end position="855"/>
    </location>
</feature>
<feature type="zinc finger region" description="C2H2-type 1" evidence="2">
    <location>
        <begin position="141"/>
        <end position="163"/>
    </location>
</feature>
<feature type="zinc finger region" description="C2H2-type 2" evidence="2">
    <location>
        <begin position="204"/>
        <end position="226"/>
    </location>
</feature>
<feature type="zinc finger region" description="C2H2-type 3" evidence="2">
    <location>
        <begin position="236"/>
        <end position="258"/>
    </location>
</feature>
<feature type="zinc finger region" description="C2H2-type 4" evidence="2">
    <location>
        <begin position="264"/>
        <end position="286"/>
    </location>
</feature>
<feature type="zinc finger region" description="C2H2-type 5" evidence="2">
    <location>
        <begin position="292"/>
        <end position="314"/>
    </location>
</feature>
<feature type="zinc finger region" description="C2H2-type 6" evidence="2">
    <location>
        <begin position="320"/>
        <end position="343"/>
    </location>
</feature>
<feature type="zinc finger region" description="C2H2-type 7" evidence="2">
    <location>
        <begin position="349"/>
        <end position="371"/>
    </location>
</feature>
<feature type="zinc finger region" description="C2H2-type 8" evidence="2">
    <location>
        <begin position="377"/>
        <end position="400"/>
    </location>
</feature>
<feature type="zinc finger region" description="C2H2-type 9" evidence="2">
    <location>
        <begin position="818"/>
        <end position="840"/>
    </location>
</feature>
<feature type="region of interest" description="Disordered" evidence="3">
    <location>
        <begin position="172"/>
        <end position="199"/>
    </location>
</feature>
<feature type="region of interest" description="Disordered" evidence="3">
    <location>
        <begin position="458"/>
        <end position="811"/>
    </location>
</feature>
<feature type="compositionally biased region" description="Polar residues" evidence="3">
    <location>
        <begin position="186"/>
        <end position="199"/>
    </location>
</feature>
<feature type="compositionally biased region" description="Basic and acidic residues" evidence="3">
    <location>
        <begin position="462"/>
        <end position="472"/>
    </location>
</feature>
<feature type="compositionally biased region" description="Basic and acidic residues" evidence="3">
    <location>
        <begin position="481"/>
        <end position="496"/>
    </location>
</feature>
<feature type="compositionally biased region" description="Basic and acidic residues" evidence="3">
    <location>
        <begin position="504"/>
        <end position="535"/>
    </location>
</feature>
<feature type="compositionally biased region" description="Polar residues" evidence="3">
    <location>
        <begin position="548"/>
        <end position="569"/>
    </location>
</feature>
<feature type="compositionally biased region" description="Basic and acidic residues" evidence="3">
    <location>
        <begin position="570"/>
        <end position="580"/>
    </location>
</feature>
<feature type="compositionally biased region" description="Basic residues" evidence="3">
    <location>
        <begin position="594"/>
        <end position="604"/>
    </location>
</feature>
<feature type="compositionally biased region" description="Basic and acidic residues" evidence="3">
    <location>
        <begin position="628"/>
        <end position="638"/>
    </location>
</feature>
<feature type="compositionally biased region" description="Basic residues" evidence="3">
    <location>
        <begin position="639"/>
        <end position="648"/>
    </location>
</feature>
<feature type="compositionally biased region" description="Polar residues" evidence="3">
    <location>
        <begin position="652"/>
        <end position="662"/>
    </location>
</feature>
<feature type="compositionally biased region" description="Basic and acidic residues" evidence="3">
    <location>
        <begin position="711"/>
        <end position="721"/>
    </location>
</feature>
<feature type="compositionally biased region" description="Basic and acidic residues" evidence="3">
    <location>
        <begin position="799"/>
        <end position="811"/>
    </location>
</feature>
<reference key="1">
    <citation type="journal article" date="2006" name="J. Neurosci.">
        <title>RE-1 silencer of transcription/neural restrictive silencer factor modulates ectodermal patterning during Xenopus development.</title>
        <authorList>
            <person name="Olguin P."/>
            <person name="Oteiza P."/>
            <person name="Gamboa E."/>
            <person name="Gomez-Skarmeta J.L."/>
            <person name="Kukuljan M."/>
        </authorList>
    </citation>
    <scope>NUCLEOTIDE SEQUENCE [MRNA]</scope>
</reference>
<dbReference type="EMBL" id="DQ377344">
    <property type="protein sequence ID" value="ABD32118.1"/>
    <property type="molecule type" value="mRNA"/>
</dbReference>
<dbReference type="SMR" id="Q2EI20"/>
<dbReference type="FunCoup" id="Q2EI20">
    <property type="interactions" value="1921"/>
</dbReference>
<dbReference type="STRING" id="7955.ENSDARP00000136293"/>
<dbReference type="PaxDb" id="7955-ENSDARP00000004965"/>
<dbReference type="eggNOG" id="KOG1721">
    <property type="taxonomic scope" value="Eukaryota"/>
</dbReference>
<dbReference type="InParanoid" id="Q2EI20"/>
<dbReference type="PhylomeDB" id="Q2EI20"/>
<dbReference type="PRO" id="PR:Q2EI20"/>
<dbReference type="Proteomes" id="UP000000437">
    <property type="component" value="Unplaced"/>
</dbReference>
<dbReference type="GO" id="GO:0005737">
    <property type="term" value="C:cytoplasm"/>
    <property type="evidence" value="ECO:0000250"/>
    <property type="project" value="UniProtKB"/>
</dbReference>
<dbReference type="GO" id="GO:0005634">
    <property type="term" value="C:nucleus"/>
    <property type="evidence" value="ECO:0000250"/>
    <property type="project" value="UniProtKB"/>
</dbReference>
<dbReference type="GO" id="GO:0008270">
    <property type="term" value="F:zinc ion binding"/>
    <property type="evidence" value="ECO:0007669"/>
    <property type="project" value="UniProtKB-KW"/>
</dbReference>
<dbReference type="GO" id="GO:0021785">
    <property type="term" value="P:branchiomotor neuron axon guidance"/>
    <property type="evidence" value="ECO:0000315"/>
    <property type="project" value="ZFIN"/>
</dbReference>
<dbReference type="GO" id="GO:0021610">
    <property type="term" value="P:facial nerve morphogenesis"/>
    <property type="evidence" value="ECO:0000315"/>
    <property type="project" value="ZFIN"/>
</dbReference>
<dbReference type="GO" id="GO:0021754">
    <property type="term" value="P:facial nucleus development"/>
    <property type="evidence" value="ECO:0000315"/>
    <property type="project" value="ZFIN"/>
</dbReference>
<dbReference type="GO" id="GO:0007626">
    <property type="term" value="P:locomotory behavior"/>
    <property type="evidence" value="ECO:0000315"/>
    <property type="project" value="ZFIN"/>
</dbReference>
<dbReference type="GO" id="GO:0097475">
    <property type="term" value="P:motor neuron migration"/>
    <property type="evidence" value="ECO:0000315"/>
    <property type="project" value="ZFIN"/>
</dbReference>
<dbReference type="GO" id="GO:0045892">
    <property type="term" value="P:negative regulation of DNA-templated transcription"/>
    <property type="evidence" value="ECO:0000250"/>
    <property type="project" value="UniProtKB"/>
</dbReference>
<dbReference type="GO" id="GO:0010629">
    <property type="term" value="P:negative regulation of gene expression"/>
    <property type="evidence" value="ECO:0000315"/>
    <property type="project" value="ZFIN"/>
</dbReference>
<dbReference type="GO" id="GO:0014043">
    <property type="term" value="P:negative regulation of neuron maturation"/>
    <property type="evidence" value="ECO:0000315"/>
    <property type="project" value="ZFIN"/>
</dbReference>
<dbReference type="GO" id="GO:0045879">
    <property type="term" value="P:negative regulation of smoothened signaling pathway"/>
    <property type="evidence" value="ECO:0000315"/>
    <property type="project" value="ZFIN"/>
</dbReference>
<dbReference type="GO" id="GO:0042551">
    <property type="term" value="P:neuron maturation"/>
    <property type="evidence" value="ECO:0000316"/>
    <property type="project" value="ZFIN"/>
</dbReference>
<dbReference type="GO" id="GO:0001764">
    <property type="term" value="P:neuron migration"/>
    <property type="evidence" value="ECO:0000315"/>
    <property type="project" value="ZFIN"/>
</dbReference>
<dbReference type="GO" id="GO:0045666">
    <property type="term" value="P:positive regulation of neuron differentiation"/>
    <property type="evidence" value="ECO:0000250"/>
    <property type="project" value="UniProtKB"/>
</dbReference>
<dbReference type="GO" id="GO:0045944">
    <property type="term" value="P:positive regulation of transcription by RNA polymerase II"/>
    <property type="evidence" value="ECO:0000318"/>
    <property type="project" value="GO_Central"/>
</dbReference>
<dbReference type="GO" id="GO:0000381">
    <property type="term" value="P:regulation of alternative mRNA splicing, via spliceosome"/>
    <property type="evidence" value="ECO:0000250"/>
    <property type="project" value="UniProtKB"/>
</dbReference>
<dbReference type="GO" id="GO:0045667">
    <property type="term" value="P:regulation of osteoblast differentiation"/>
    <property type="evidence" value="ECO:0000250"/>
    <property type="project" value="UniProtKB"/>
</dbReference>
<dbReference type="GO" id="GO:0001666">
    <property type="term" value="P:response to hypoxia"/>
    <property type="evidence" value="ECO:0000250"/>
    <property type="project" value="UniProtKB"/>
</dbReference>
<dbReference type="GO" id="GO:0060831">
    <property type="term" value="P:smoothened signaling pathway involved in dorsal/ventral neural tube patterning"/>
    <property type="evidence" value="ECO:0000315"/>
    <property type="project" value="ZFIN"/>
</dbReference>
<dbReference type="FunFam" id="3.30.160.60:FF:002187">
    <property type="entry name" value="RE1-silencing transcription factor"/>
    <property type="match status" value="1"/>
</dbReference>
<dbReference type="FunFam" id="3.30.160.60:FF:000662">
    <property type="entry name" value="RE1-silencing transcription factor A"/>
    <property type="match status" value="1"/>
</dbReference>
<dbReference type="FunFam" id="3.30.160.60:FF:000805">
    <property type="entry name" value="RE1-silencing transcription factor B"/>
    <property type="match status" value="1"/>
</dbReference>
<dbReference type="FunFam" id="3.30.160.60:FF:000952">
    <property type="entry name" value="RE1-silencing transcription factor B"/>
    <property type="match status" value="1"/>
</dbReference>
<dbReference type="FunFam" id="3.30.160.60:FF:000395">
    <property type="entry name" value="zinc finger protein 513"/>
    <property type="match status" value="1"/>
</dbReference>
<dbReference type="Gene3D" id="3.30.160.60">
    <property type="entry name" value="Classic Zinc Finger"/>
    <property type="match status" value="5"/>
</dbReference>
<dbReference type="InterPro" id="IPR050688">
    <property type="entry name" value="Zinc_finger/UBP_domain"/>
</dbReference>
<dbReference type="InterPro" id="IPR036236">
    <property type="entry name" value="Znf_C2H2_sf"/>
</dbReference>
<dbReference type="InterPro" id="IPR013087">
    <property type="entry name" value="Znf_C2H2_type"/>
</dbReference>
<dbReference type="PANTHER" id="PTHR24403:SF102">
    <property type="entry name" value="RE1-SILENCING TRANSCRIPTION FACTOR"/>
    <property type="match status" value="1"/>
</dbReference>
<dbReference type="PANTHER" id="PTHR24403">
    <property type="entry name" value="ZINC FINGER PROTEIN"/>
    <property type="match status" value="1"/>
</dbReference>
<dbReference type="Pfam" id="PF24540">
    <property type="entry name" value="zf-C2H2_REST"/>
    <property type="match status" value="1"/>
</dbReference>
<dbReference type="Pfam" id="PF13909">
    <property type="entry name" value="zf-H2C2_5"/>
    <property type="match status" value="1"/>
</dbReference>
<dbReference type="SMART" id="SM00355">
    <property type="entry name" value="ZnF_C2H2"/>
    <property type="match status" value="9"/>
</dbReference>
<dbReference type="SUPFAM" id="SSF57667">
    <property type="entry name" value="beta-beta-alpha zinc fingers"/>
    <property type="match status" value="3"/>
</dbReference>
<dbReference type="PROSITE" id="PS00028">
    <property type="entry name" value="ZINC_FINGER_C2H2_1"/>
    <property type="match status" value="1"/>
</dbReference>
<dbReference type="PROSITE" id="PS50157">
    <property type="entry name" value="ZINC_FINGER_C2H2_2"/>
    <property type="match status" value="6"/>
</dbReference>
<keyword id="KW-0963">Cytoplasm</keyword>
<keyword id="KW-0479">Metal-binding</keyword>
<keyword id="KW-0539">Nucleus</keyword>
<keyword id="KW-1185">Reference proteome</keyword>
<keyword id="KW-0677">Repeat</keyword>
<keyword id="KW-0678">Repressor</keyword>
<keyword id="KW-0804">Transcription</keyword>
<keyword id="KW-0805">Transcription regulation</keyword>
<keyword id="KW-0862">Zinc</keyword>
<keyword id="KW-0863">Zinc-finger</keyword>
<evidence type="ECO:0000250" key="1">
    <source>
        <dbReference type="UniProtKB" id="Q13127"/>
    </source>
</evidence>
<evidence type="ECO:0000255" key="2">
    <source>
        <dbReference type="PROSITE-ProRule" id="PRU00042"/>
    </source>
</evidence>
<evidence type="ECO:0000256" key="3">
    <source>
        <dbReference type="SAM" id="MobiDB-lite"/>
    </source>
</evidence>
<accession>Q2EI20</accession>
<protein>
    <recommendedName>
        <fullName>RE1-silencing transcription factor</fullName>
    </recommendedName>
    <alternativeName>
        <fullName>Neural-restrictive silencer factor</fullName>
    </alternativeName>
</protein>